<proteinExistence type="inferred from homology"/>
<feature type="chain" id="PRO_0000223253" description="Protein FAM32A-like">
    <location>
        <begin position="1"/>
        <end position="109"/>
    </location>
</feature>
<feature type="region of interest" description="Disordered" evidence="2">
    <location>
        <begin position="1"/>
        <end position="48"/>
    </location>
</feature>
<feature type="compositionally biased region" description="Low complexity" evidence="2">
    <location>
        <begin position="9"/>
        <end position="20"/>
    </location>
</feature>
<feature type="compositionally biased region" description="Basic residues" evidence="2">
    <location>
        <begin position="21"/>
        <end position="30"/>
    </location>
</feature>
<accession>Q6GQN4</accession>
<evidence type="ECO:0000250" key="1"/>
<evidence type="ECO:0000256" key="2">
    <source>
        <dbReference type="SAM" id="MobiDB-lite"/>
    </source>
</evidence>
<evidence type="ECO:0000305" key="3"/>
<reference key="1">
    <citation type="submission" date="2004-06" db="EMBL/GenBank/DDBJ databases">
        <authorList>
            <consortium name="NIH - Zebrafish Gene Collection (ZGC) project"/>
        </authorList>
    </citation>
    <scope>NUCLEOTIDE SEQUENCE [LARGE SCALE MRNA]</scope>
    <source>
        <tissue>Embryo</tissue>
    </source>
</reference>
<gene>
    <name type="primary">fam32al</name>
    <name type="synonym">fam32a</name>
    <name type="synonym">zgc:91831</name>
</gene>
<name>FA32A_DANRE</name>
<comment type="function">
    <text evidence="1">May induce G2 arrest and apoptosis. May also increase cell sensitivity to apoptotic stimuli.</text>
</comment>
<comment type="subcellular location">
    <subcellularLocation>
        <location evidence="1">Nucleus</location>
    </subcellularLocation>
</comment>
<comment type="similarity">
    <text evidence="3">Belongs to the FAM32 family.</text>
</comment>
<sequence length="109" mass="12935">MSEYKSVQKGSLKLKGVSLPSKKKKKKNKEMKRLEEQVLTSENEEGTKKAYVDKRTPAQMAFDKIQEKRQMERILKKASKTHKRRVEDFNRHLDTLTEHYDIPKVSWTK</sequence>
<dbReference type="EMBL" id="BC072708">
    <property type="protein sequence ID" value="AAH72708.1"/>
    <property type="molecule type" value="mRNA"/>
</dbReference>
<dbReference type="RefSeq" id="NP_001002203.1">
    <property type="nucleotide sequence ID" value="NM_001002203.1"/>
</dbReference>
<dbReference type="SMR" id="Q6GQN4"/>
<dbReference type="FunCoup" id="Q6GQN4">
    <property type="interactions" value="1778"/>
</dbReference>
<dbReference type="STRING" id="7955.ENSDARP00000108572"/>
<dbReference type="PaxDb" id="7955-ENSDARP00000108572"/>
<dbReference type="Ensembl" id="ENSDART00000128149">
    <property type="protein sequence ID" value="ENSDARP00000108572"/>
    <property type="gene ID" value="ENSDARG00000042660"/>
</dbReference>
<dbReference type="GeneID" id="431750"/>
<dbReference type="KEGG" id="dre:431750"/>
<dbReference type="AGR" id="ZFIN:ZDB-GENE-040704-44"/>
<dbReference type="CTD" id="26017"/>
<dbReference type="ZFIN" id="ZDB-GENE-040704-44">
    <property type="gene designation" value="fam32a"/>
</dbReference>
<dbReference type="eggNOG" id="KOG3410">
    <property type="taxonomic scope" value="Eukaryota"/>
</dbReference>
<dbReference type="HOGENOM" id="CLU_098435_3_0_1"/>
<dbReference type="InParanoid" id="Q6GQN4"/>
<dbReference type="OMA" id="IASTTHK"/>
<dbReference type="OrthoDB" id="205403at2759"/>
<dbReference type="PhylomeDB" id="Q6GQN4"/>
<dbReference type="TreeFam" id="TF314020"/>
<dbReference type="Reactome" id="R-DRE-72163">
    <property type="pathway name" value="mRNA Splicing - Major Pathway"/>
</dbReference>
<dbReference type="PRO" id="PR:Q6GQN4"/>
<dbReference type="Proteomes" id="UP000000437">
    <property type="component" value="Alternate scaffold 22"/>
</dbReference>
<dbReference type="Proteomes" id="UP000000437">
    <property type="component" value="Chromosome 22"/>
</dbReference>
<dbReference type="Bgee" id="ENSDARG00000042660">
    <property type="expression patterns" value="Expressed in blastula and 22 other cell types or tissues"/>
</dbReference>
<dbReference type="GO" id="GO:0005730">
    <property type="term" value="C:nucleolus"/>
    <property type="evidence" value="ECO:0000318"/>
    <property type="project" value="GO_Central"/>
</dbReference>
<dbReference type="GO" id="GO:0006915">
    <property type="term" value="P:apoptotic process"/>
    <property type="evidence" value="ECO:0007669"/>
    <property type="project" value="UniProtKB-KW"/>
</dbReference>
<dbReference type="InterPro" id="IPR013865">
    <property type="entry name" value="FAM32A"/>
</dbReference>
<dbReference type="PANTHER" id="PTHR13282">
    <property type="entry name" value="PROTEIN FAM32A"/>
    <property type="match status" value="1"/>
</dbReference>
<dbReference type="PANTHER" id="PTHR13282:SF6">
    <property type="entry name" value="PROTEIN FAM32A"/>
    <property type="match status" value="1"/>
</dbReference>
<dbReference type="Pfam" id="PF08555">
    <property type="entry name" value="FAM32A"/>
    <property type="match status" value="1"/>
</dbReference>
<organism>
    <name type="scientific">Danio rerio</name>
    <name type="common">Zebrafish</name>
    <name type="synonym">Brachydanio rerio</name>
    <dbReference type="NCBI Taxonomy" id="7955"/>
    <lineage>
        <taxon>Eukaryota</taxon>
        <taxon>Metazoa</taxon>
        <taxon>Chordata</taxon>
        <taxon>Craniata</taxon>
        <taxon>Vertebrata</taxon>
        <taxon>Euteleostomi</taxon>
        <taxon>Actinopterygii</taxon>
        <taxon>Neopterygii</taxon>
        <taxon>Teleostei</taxon>
        <taxon>Ostariophysi</taxon>
        <taxon>Cypriniformes</taxon>
        <taxon>Danionidae</taxon>
        <taxon>Danioninae</taxon>
        <taxon>Danio</taxon>
    </lineage>
</organism>
<keyword id="KW-0053">Apoptosis</keyword>
<keyword id="KW-0131">Cell cycle</keyword>
<keyword id="KW-0539">Nucleus</keyword>
<keyword id="KW-1185">Reference proteome</keyword>
<protein>
    <recommendedName>
        <fullName>Protein FAM32A-like</fullName>
    </recommendedName>
</protein>